<organism>
    <name type="scientific">Chlamydia trachomatis serovar L2b (strain UCH-1/proctitis)</name>
    <dbReference type="NCBI Taxonomy" id="471473"/>
    <lineage>
        <taxon>Bacteria</taxon>
        <taxon>Pseudomonadati</taxon>
        <taxon>Chlamydiota</taxon>
        <taxon>Chlamydiia</taxon>
        <taxon>Chlamydiales</taxon>
        <taxon>Chlamydiaceae</taxon>
        <taxon>Chlamydia/Chlamydophila group</taxon>
        <taxon>Chlamydia</taxon>
    </lineage>
</organism>
<name>IPYR_CHLTB</name>
<sequence>MSKTPLSIAHPWHGPVLTRDDYESLCCYIEITPADSVKFELDKETGILKVDRPQKFSNFCPCLYGLLPKTYCGDLSGEYSGQQSNRENIKGDGDPLDICVLTEKNITQGNILLQARPIGGIRILDSEEADDKIIAVLEDDLVYGNIEDISECPGTVLDMIQHYFLTYKATPESLIQAKPAKIEIVGLYGKKEAQKVIRLAHEDYCNLFM</sequence>
<feature type="chain" id="PRO_1000099657" description="Inorganic pyrophosphatase">
    <location>
        <begin position="1"/>
        <end position="209"/>
    </location>
</feature>
<feature type="binding site" evidence="1">
    <location>
        <position position="38"/>
    </location>
    <ligand>
        <name>substrate</name>
    </ligand>
</feature>
<feature type="binding site" evidence="1">
    <location>
        <position position="52"/>
    </location>
    <ligand>
        <name>substrate</name>
    </ligand>
</feature>
<feature type="binding site" evidence="1">
    <location>
        <position position="64"/>
    </location>
    <ligand>
        <name>substrate</name>
    </ligand>
</feature>
<feature type="binding site" evidence="1">
    <location>
        <position position="92"/>
    </location>
    <ligand>
        <name>Mg(2+)</name>
        <dbReference type="ChEBI" id="CHEBI:18420"/>
        <label>1</label>
    </ligand>
</feature>
<feature type="binding site" evidence="1">
    <location>
        <position position="97"/>
    </location>
    <ligand>
        <name>Mg(2+)</name>
        <dbReference type="ChEBI" id="CHEBI:18420"/>
        <label>1</label>
    </ligand>
</feature>
<feature type="binding site" evidence="1">
    <location>
        <position position="97"/>
    </location>
    <ligand>
        <name>Mg(2+)</name>
        <dbReference type="ChEBI" id="CHEBI:18420"/>
        <label>2</label>
    </ligand>
</feature>
<feature type="binding site" evidence="1">
    <location>
        <position position="130"/>
    </location>
    <ligand>
        <name>Mg(2+)</name>
        <dbReference type="ChEBI" id="CHEBI:18420"/>
        <label>1</label>
    </ligand>
</feature>
<feature type="binding site" evidence="1">
    <location>
        <position position="167"/>
    </location>
    <ligand>
        <name>substrate</name>
    </ligand>
</feature>
<accession>B0BAM7</accession>
<keyword id="KW-0963">Cytoplasm</keyword>
<keyword id="KW-0378">Hydrolase</keyword>
<keyword id="KW-0460">Magnesium</keyword>
<keyword id="KW-0479">Metal-binding</keyword>
<proteinExistence type="inferred from homology"/>
<comment type="function">
    <text evidence="1">Catalyzes the hydrolysis of inorganic pyrophosphate (PPi) forming two phosphate ions.</text>
</comment>
<comment type="catalytic activity">
    <reaction evidence="1">
        <text>diphosphate + H2O = 2 phosphate + H(+)</text>
        <dbReference type="Rhea" id="RHEA:24576"/>
        <dbReference type="ChEBI" id="CHEBI:15377"/>
        <dbReference type="ChEBI" id="CHEBI:15378"/>
        <dbReference type="ChEBI" id="CHEBI:33019"/>
        <dbReference type="ChEBI" id="CHEBI:43474"/>
        <dbReference type="EC" id="3.6.1.1"/>
    </reaction>
</comment>
<comment type="cofactor">
    <cofactor evidence="1">
        <name>Mg(2+)</name>
        <dbReference type="ChEBI" id="CHEBI:18420"/>
    </cofactor>
</comment>
<comment type="subunit">
    <text evidence="1">Homohexamer.</text>
</comment>
<comment type="subcellular location">
    <subcellularLocation>
        <location evidence="1">Cytoplasm</location>
    </subcellularLocation>
</comment>
<comment type="similarity">
    <text evidence="1">Belongs to the PPase family.</text>
</comment>
<dbReference type="EC" id="3.6.1.1" evidence="1"/>
<dbReference type="EMBL" id="AM884177">
    <property type="protein sequence ID" value="CAP06539.1"/>
    <property type="molecule type" value="Genomic_DNA"/>
</dbReference>
<dbReference type="RefSeq" id="WP_009872152.1">
    <property type="nucleotide sequence ID" value="NC_010280.2"/>
</dbReference>
<dbReference type="SMR" id="B0BAM7"/>
<dbReference type="KEGG" id="ctl:CTLon_0141"/>
<dbReference type="HOGENOM" id="CLU_073198_2_1_0"/>
<dbReference type="Proteomes" id="UP001154401">
    <property type="component" value="Chromosome"/>
</dbReference>
<dbReference type="GO" id="GO:0005737">
    <property type="term" value="C:cytoplasm"/>
    <property type="evidence" value="ECO:0007669"/>
    <property type="project" value="UniProtKB-SubCell"/>
</dbReference>
<dbReference type="GO" id="GO:0004427">
    <property type="term" value="F:inorganic diphosphate phosphatase activity"/>
    <property type="evidence" value="ECO:0007669"/>
    <property type="project" value="UniProtKB-UniRule"/>
</dbReference>
<dbReference type="GO" id="GO:0000287">
    <property type="term" value="F:magnesium ion binding"/>
    <property type="evidence" value="ECO:0007669"/>
    <property type="project" value="UniProtKB-UniRule"/>
</dbReference>
<dbReference type="GO" id="GO:0006796">
    <property type="term" value="P:phosphate-containing compound metabolic process"/>
    <property type="evidence" value="ECO:0007669"/>
    <property type="project" value="InterPro"/>
</dbReference>
<dbReference type="CDD" id="cd00412">
    <property type="entry name" value="pyrophosphatase"/>
    <property type="match status" value="1"/>
</dbReference>
<dbReference type="FunFam" id="3.90.80.10:FF:000016">
    <property type="entry name" value="Inorganic pyrophosphatase"/>
    <property type="match status" value="1"/>
</dbReference>
<dbReference type="Gene3D" id="3.90.80.10">
    <property type="entry name" value="Inorganic pyrophosphatase"/>
    <property type="match status" value="1"/>
</dbReference>
<dbReference type="HAMAP" id="MF_00209">
    <property type="entry name" value="Inorganic_PPase"/>
    <property type="match status" value="1"/>
</dbReference>
<dbReference type="InterPro" id="IPR008162">
    <property type="entry name" value="Pyrophosphatase"/>
</dbReference>
<dbReference type="InterPro" id="IPR036649">
    <property type="entry name" value="Pyrophosphatase_sf"/>
</dbReference>
<dbReference type="NCBIfam" id="NF001886">
    <property type="entry name" value="PRK00642.1"/>
    <property type="match status" value="1"/>
</dbReference>
<dbReference type="PANTHER" id="PTHR10286">
    <property type="entry name" value="INORGANIC PYROPHOSPHATASE"/>
    <property type="match status" value="1"/>
</dbReference>
<dbReference type="Pfam" id="PF00719">
    <property type="entry name" value="Pyrophosphatase"/>
    <property type="match status" value="1"/>
</dbReference>
<dbReference type="SUPFAM" id="SSF50324">
    <property type="entry name" value="Inorganic pyrophosphatase"/>
    <property type="match status" value="1"/>
</dbReference>
<dbReference type="PROSITE" id="PS00387">
    <property type="entry name" value="PPASE"/>
    <property type="match status" value="1"/>
</dbReference>
<protein>
    <recommendedName>
        <fullName evidence="1">Inorganic pyrophosphatase</fullName>
        <ecNumber evidence="1">3.6.1.1</ecNumber>
    </recommendedName>
    <alternativeName>
        <fullName evidence="1">Pyrophosphate phospho-hydrolase</fullName>
        <shortName evidence="1">PPase</shortName>
    </alternativeName>
</protein>
<evidence type="ECO:0000255" key="1">
    <source>
        <dbReference type="HAMAP-Rule" id="MF_00209"/>
    </source>
</evidence>
<gene>
    <name evidence="1" type="primary">ppa</name>
    <name type="ordered locus">CTLon_0141</name>
</gene>
<reference key="1">
    <citation type="journal article" date="2008" name="Genome Res.">
        <title>Chlamydia trachomatis: genome sequence analysis of lymphogranuloma venereum isolates.</title>
        <authorList>
            <person name="Thomson N.R."/>
            <person name="Holden M.T.G."/>
            <person name="Carder C."/>
            <person name="Lennard N."/>
            <person name="Lockey S.J."/>
            <person name="Marsh P."/>
            <person name="Skipp P."/>
            <person name="O'Connor C.D."/>
            <person name="Goodhead I."/>
            <person name="Norbertzcak H."/>
            <person name="Harris B."/>
            <person name="Ormond D."/>
            <person name="Rance R."/>
            <person name="Quail M.A."/>
            <person name="Parkhill J."/>
            <person name="Stephens R.S."/>
            <person name="Clarke I.N."/>
        </authorList>
    </citation>
    <scope>NUCLEOTIDE SEQUENCE [LARGE SCALE GENOMIC DNA]</scope>
    <source>
        <strain>UCH-1/proctitis</strain>
    </source>
</reference>